<dbReference type="EC" id="7.1.1.-" evidence="1"/>
<dbReference type="EMBL" id="AM777385">
    <property type="protein sequence ID" value="CAO85979.1"/>
    <property type="molecule type" value="Genomic_DNA"/>
</dbReference>
<dbReference type="RefSeq" id="YP_001531286.1">
    <property type="nucleotide sequence ID" value="NC_009950.1"/>
</dbReference>
<dbReference type="SMR" id="A8Y9H3"/>
<dbReference type="GeneID" id="5696551"/>
<dbReference type="KEGG" id="lper:5696551"/>
<dbReference type="GO" id="GO:0009535">
    <property type="term" value="C:chloroplast thylakoid membrane"/>
    <property type="evidence" value="ECO:0007669"/>
    <property type="project" value="UniProtKB-SubCell"/>
</dbReference>
<dbReference type="GO" id="GO:0008137">
    <property type="term" value="F:NADH dehydrogenase (ubiquinone) activity"/>
    <property type="evidence" value="ECO:0007669"/>
    <property type="project" value="InterPro"/>
</dbReference>
<dbReference type="GO" id="GO:0048038">
    <property type="term" value="F:quinone binding"/>
    <property type="evidence" value="ECO:0007669"/>
    <property type="project" value="UniProtKB-KW"/>
</dbReference>
<dbReference type="GO" id="GO:0019684">
    <property type="term" value="P:photosynthesis, light reaction"/>
    <property type="evidence" value="ECO:0007669"/>
    <property type="project" value="UniProtKB-UniRule"/>
</dbReference>
<dbReference type="Gene3D" id="3.30.460.80">
    <property type="entry name" value="NADH:ubiquinone oxidoreductase, 30kDa subunit"/>
    <property type="match status" value="1"/>
</dbReference>
<dbReference type="HAMAP" id="MF_01357">
    <property type="entry name" value="NDH1_NuoC"/>
    <property type="match status" value="1"/>
</dbReference>
<dbReference type="InterPro" id="IPR010218">
    <property type="entry name" value="NADH_DH_suC"/>
</dbReference>
<dbReference type="InterPro" id="IPR037232">
    <property type="entry name" value="NADH_quin_OxRdtase_su_C/D-like"/>
</dbReference>
<dbReference type="InterPro" id="IPR001268">
    <property type="entry name" value="NADH_UbQ_OxRdtase_30kDa_su"/>
</dbReference>
<dbReference type="InterPro" id="IPR020396">
    <property type="entry name" value="NADH_UbQ_OxRdtase_CS"/>
</dbReference>
<dbReference type="NCBIfam" id="NF009141">
    <property type="entry name" value="PRK12494.1"/>
    <property type="match status" value="1"/>
</dbReference>
<dbReference type="PANTHER" id="PTHR10884:SF14">
    <property type="entry name" value="NADH DEHYDROGENASE [UBIQUINONE] IRON-SULFUR PROTEIN 3, MITOCHONDRIAL"/>
    <property type="match status" value="1"/>
</dbReference>
<dbReference type="PANTHER" id="PTHR10884">
    <property type="entry name" value="NADH DEHYDROGENASE UBIQUINONE IRON-SULFUR PROTEIN 3"/>
    <property type="match status" value="1"/>
</dbReference>
<dbReference type="Pfam" id="PF00329">
    <property type="entry name" value="Complex1_30kDa"/>
    <property type="match status" value="1"/>
</dbReference>
<dbReference type="SUPFAM" id="SSF143243">
    <property type="entry name" value="Nqo5-like"/>
    <property type="match status" value="1"/>
</dbReference>
<dbReference type="PROSITE" id="PS00542">
    <property type="entry name" value="COMPLEX1_30K"/>
    <property type="match status" value="1"/>
</dbReference>
<feature type="chain" id="PRO_0000358280" description="NAD(P)H-quinone oxidoreductase subunit J, chloroplastic">
    <location>
        <begin position="1"/>
        <end position="159"/>
    </location>
</feature>
<protein>
    <recommendedName>
        <fullName evidence="1">NAD(P)H-quinone oxidoreductase subunit J, chloroplastic</fullName>
        <ecNumber evidence="1">7.1.1.-</ecNumber>
    </recommendedName>
    <alternativeName>
        <fullName>NAD(P)H dehydrogenase subunit J</fullName>
    </alternativeName>
    <alternativeName>
        <fullName evidence="1">NADH-plastoquinone oxidoreductase subunit J</fullName>
    </alternativeName>
</protein>
<comment type="function">
    <text evidence="1">NDH shuttles electrons from NAD(P)H:plastoquinone, via FMN and iron-sulfur (Fe-S) centers, to quinones in the photosynthetic chain and possibly in a chloroplast respiratory chain. The immediate electron acceptor for the enzyme in this species is believed to be plastoquinone. Couples the redox reaction to proton translocation, and thus conserves the redox energy in a proton gradient.</text>
</comment>
<comment type="catalytic activity">
    <reaction evidence="1">
        <text>a plastoquinone + NADH + (n+1) H(+)(in) = a plastoquinol + NAD(+) + n H(+)(out)</text>
        <dbReference type="Rhea" id="RHEA:42608"/>
        <dbReference type="Rhea" id="RHEA-COMP:9561"/>
        <dbReference type="Rhea" id="RHEA-COMP:9562"/>
        <dbReference type="ChEBI" id="CHEBI:15378"/>
        <dbReference type="ChEBI" id="CHEBI:17757"/>
        <dbReference type="ChEBI" id="CHEBI:57540"/>
        <dbReference type="ChEBI" id="CHEBI:57945"/>
        <dbReference type="ChEBI" id="CHEBI:62192"/>
    </reaction>
</comment>
<comment type="catalytic activity">
    <reaction evidence="1">
        <text>a plastoquinone + NADPH + (n+1) H(+)(in) = a plastoquinol + NADP(+) + n H(+)(out)</text>
        <dbReference type="Rhea" id="RHEA:42612"/>
        <dbReference type="Rhea" id="RHEA-COMP:9561"/>
        <dbReference type="Rhea" id="RHEA-COMP:9562"/>
        <dbReference type="ChEBI" id="CHEBI:15378"/>
        <dbReference type="ChEBI" id="CHEBI:17757"/>
        <dbReference type="ChEBI" id="CHEBI:57783"/>
        <dbReference type="ChEBI" id="CHEBI:58349"/>
        <dbReference type="ChEBI" id="CHEBI:62192"/>
    </reaction>
</comment>
<comment type="subunit">
    <text evidence="1">NDH is composed of at least 16 different subunits, 5 of which are encoded in the nucleus.</text>
</comment>
<comment type="subcellular location">
    <subcellularLocation>
        <location evidence="1">Plastid</location>
        <location evidence="1">Chloroplast thylakoid membrane</location>
        <topology evidence="1">Peripheral membrane protein</topology>
        <orientation evidence="1">Stromal side</orientation>
    </subcellularLocation>
</comment>
<comment type="similarity">
    <text evidence="1">Belongs to the complex I 30 kDa subunit family.</text>
</comment>
<organism>
    <name type="scientific">Lolium perenne</name>
    <name type="common">Perennial ryegrass</name>
    <dbReference type="NCBI Taxonomy" id="4522"/>
    <lineage>
        <taxon>Eukaryota</taxon>
        <taxon>Viridiplantae</taxon>
        <taxon>Streptophyta</taxon>
        <taxon>Embryophyta</taxon>
        <taxon>Tracheophyta</taxon>
        <taxon>Spermatophyta</taxon>
        <taxon>Magnoliopsida</taxon>
        <taxon>Liliopsida</taxon>
        <taxon>Poales</taxon>
        <taxon>Poaceae</taxon>
        <taxon>BOP clade</taxon>
        <taxon>Pooideae</taxon>
        <taxon>Poodae</taxon>
        <taxon>Poeae</taxon>
        <taxon>Poeae Chloroplast Group 2 (Poeae type)</taxon>
        <taxon>Loliodinae</taxon>
        <taxon>Loliinae</taxon>
        <taxon>Lolium</taxon>
    </lineage>
</organism>
<evidence type="ECO:0000255" key="1">
    <source>
        <dbReference type="HAMAP-Rule" id="MF_01357"/>
    </source>
</evidence>
<proteinExistence type="inferred from homology"/>
<keyword id="KW-0150">Chloroplast</keyword>
<keyword id="KW-0472">Membrane</keyword>
<keyword id="KW-0520">NAD</keyword>
<keyword id="KW-0521">NADP</keyword>
<keyword id="KW-0934">Plastid</keyword>
<keyword id="KW-0618">Plastoquinone</keyword>
<keyword id="KW-0874">Quinone</keyword>
<keyword id="KW-0793">Thylakoid</keyword>
<keyword id="KW-1278">Translocase</keyword>
<keyword id="KW-0813">Transport</keyword>
<gene>
    <name evidence="1" type="primary">ndhJ</name>
    <name type="ordered locus">LopeCp041</name>
</gene>
<geneLocation type="chloroplast"/>
<name>NDHJ_LOLPR</name>
<reference key="1">
    <citation type="journal article" date="2008" name="PLoS ONE">
        <title>An optimized chloroplast DNA extraction protocol for grasses (Poaceae) proves suitable for whole plastid genome sequencing and SNP detection.</title>
        <authorList>
            <person name="Diekmann K."/>
            <person name="Hodkinson T.R."/>
            <person name="Fricke E."/>
            <person name="Barth S."/>
        </authorList>
    </citation>
    <scope>NUCLEOTIDE SEQUENCE [LARGE SCALE GENOMIC DNA]</scope>
    <source>
        <strain>cv. Cashel</strain>
    </source>
</reference>
<sequence>MQQGWLSNWLVKHEVVHRSLGFDHRGIETLQIKAGDWDSIAVILYVYGYNYLRSQCAYDVAPGGSLASVYHLTRIQYGIDNPEEVCIKVFAQKDNPRIPSVFWIWRSADFQERESYDMVGISYDNHPRLKRILMPESWIGWPLRKDYITPNFYEIQDAH</sequence>
<accession>A8Y9H3</accession>